<reference key="1">
    <citation type="journal article" date="2005" name="Gene">
        <title>Isolation and characterization of murine Cds (CDP-diacylglycerol synthase) 1 and 2.</title>
        <authorList>
            <person name="Inglis-Broadgate S.L."/>
            <person name="Ocaka L."/>
            <person name="Banerjee R."/>
            <person name="Gaasenbeek M."/>
            <person name="Chapple J.P."/>
            <person name="Cheetham M.E."/>
            <person name="Clark B.J."/>
            <person name="Hunt D.M."/>
            <person name="Halford S."/>
        </authorList>
    </citation>
    <scope>NUCLEOTIDE SEQUENCE [MRNA]</scope>
    <scope>SUBCELLULAR LOCATION</scope>
    <scope>TISSUE SPECIFICITY</scope>
    <source>
        <strain>C57BL/6J</strain>
    </source>
</reference>
<reference key="2">
    <citation type="journal article" date="2004" name="Genome Res.">
        <title>The status, quality, and expansion of the NIH full-length cDNA project: the Mammalian Gene Collection (MGC).</title>
        <authorList>
            <consortium name="The MGC Project Team"/>
        </authorList>
    </citation>
    <scope>NUCLEOTIDE SEQUENCE [LARGE SCALE MRNA]</scope>
    <source>
        <tissue>Eye</tissue>
    </source>
</reference>
<reference key="3">
    <citation type="journal article" date="1999" name="Genomics">
        <title>Identification and characterization of CDS2, a mammalian homolog of the Drosophila CDP-diacylglycerol synthase gene.</title>
        <authorList>
            <person name="Volta M."/>
            <person name="Bulfone A."/>
            <person name="Gattuso C."/>
            <person name="Rossi E."/>
            <person name="Mariani M."/>
            <person name="Consalez G.G."/>
            <person name="Zuffardi O."/>
            <person name="Ballabio A."/>
            <person name="Banfi S."/>
            <person name="Franco B."/>
        </authorList>
    </citation>
    <scope>TISSUE SPECIFICITY</scope>
    <scope>DEVELOPMENTAL STAGE</scope>
</reference>
<reference key="4">
    <citation type="journal article" date="2010" name="Cell">
        <title>A tissue-specific atlas of mouse protein phosphorylation and expression.</title>
        <authorList>
            <person name="Huttlin E.L."/>
            <person name="Jedrychowski M.P."/>
            <person name="Elias J.E."/>
            <person name="Goswami T."/>
            <person name="Rad R."/>
            <person name="Beausoleil S.A."/>
            <person name="Villen J."/>
            <person name="Haas W."/>
            <person name="Sowa M.E."/>
            <person name="Gygi S.P."/>
        </authorList>
    </citation>
    <scope>PHOSPHORYLATION [LARGE SCALE ANALYSIS] AT SER-37</scope>
    <scope>IDENTIFICATION BY MASS SPECTROMETRY [LARGE SCALE ANALYSIS]</scope>
    <source>
        <tissue>Brain</tissue>
        <tissue>Kidney</tissue>
        <tissue>Testis</tissue>
    </source>
</reference>
<reference key="5">
    <citation type="journal article" date="2012" name="Oncogene">
        <title>The kinase c-Src and the phosphatase TC45 coordinately regulate c-Fos tyrosine phosphorylation and c-Fos phospholipid synthesis activation capacity.</title>
        <authorList>
            <person name="Ferrero G.O."/>
            <person name="Velazquez F.N."/>
            <person name="Caputto B.L."/>
        </authorList>
    </citation>
    <scope>INTERACTION WITH FOS</scope>
</reference>
<reference key="6">
    <citation type="journal article" date="2016" name="J. Lipid Res.">
        <title>CDP-diacylglycerol synthases regulate the growth of lipid droplets and adipocyte development.</title>
        <authorList>
            <person name="Qi Y."/>
            <person name="Kapterian T.S."/>
            <person name="Du X."/>
            <person name="Ma Q."/>
            <person name="Fei W."/>
            <person name="Zhang Y."/>
            <person name="Huang X."/>
            <person name="Dawes I.W."/>
            <person name="Yang H."/>
        </authorList>
    </citation>
    <scope>FUNCTION</scope>
</reference>
<reference key="7">
    <citation type="journal article" date="2014" name="Mol. Cell. Proteomics">
        <title>Immunoaffinity enrichment and mass spectrometry analysis of protein methylation.</title>
        <authorList>
            <person name="Guo A."/>
            <person name="Gu H."/>
            <person name="Zhou J."/>
            <person name="Mulhern D."/>
            <person name="Wang Y."/>
            <person name="Lee K.A."/>
            <person name="Yang V."/>
            <person name="Aguiar M."/>
            <person name="Kornhauser J."/>
            <person name="Jia X."/>
            <person name="Ren J."/>
            <person name="Beausoleil S.A."/>
            <person name="Silva J.C."/>
            <person name="Vemulapalli V."/>
            <person name="Bedford M.T."/>
            <person name="Comb M.J."/>
        </authorList>
    </citation>
    <scope>METHYLATION [LARGE SCALE ANALYSIS] AT ARG-7</scope>
    <scope>IDENTIFICATION BY MASS SPECTROMETRY [LARGE SCALE ANALYSIS]</scope>
    <source>
        <tissue>Brain</tissue>
    </source>
</reference>
<dbReference type="EC" id="2.7.7.41" evidence="2"/>
<dbReference type="EMBL" id="AF533367">
    <property type="protein sequence ID" value="AAO16167.2"/>
    <property type="molecule type" value="mRNA"/>
</dbReference>
<dbReference type="EMBL" id="BC055292">
    <property type="protein sequence ID" value="AAH55292.1"/>
    <property type="molecule type" value="mRNA"/>
</dbReference>
<dbReference type="CCDS" id="CCDS19472.1"/>
<dbReference type="RefSeq" id="NP_775546.2">
    <property type="nucleotide sequence ID" value="NM_173370.3"/>
</dbReference>
<dbReference type="SMR" id="P98191"/>
<dbReference type="FunCoup" id="P98191">
    <property type="interactions" value="1963"/>
</dbReference>
<dbReference type="STRING" id="10090.ENSMUSP00000031273"/>
<dbReference type="GlyGen" id="P98191">
    <property type="glycosylation" value="1 site, 1 O-linked glycan (1 site)"/>
</dbReference>
<dbReference type="iPTMnet" id="P98191"/>
<dbReference type="PhosphoSitePlus" id="P98191"/>
<dbReference type="SwissPalm" id="P98191"/>
<dbReference type="PaxDb" id="10090-ENSMUSP00000031273"/>
<dbReference type="PeptideAtlas" id="P98191"/>
<dbReference type="ProteomicsDB" id="283871"/>
<dbReference type="Antibodypedia" id="25245">
    <property type="antibodies" value="85 antibodies from 21 providers"/>
</dbReference>
<dbReference type="DNASU" id="74596"/>
<dbReference type="Ensembl" id="ENSMUST00000031273.9">
    <property type="protein sequence ID" value="ENSMUSP00000031273.9"/>
    <property type="gene ID" value="ENSMUSG00000029330.9"/>
</dbReference>
<dbReference type="GeneID" id="74596"/>
<dbReference type="KEGG" id="mmu:74596"/>
<dbReference type="UCSC" id="uc008yio.1">
    <property type="organism name" value="mouse"/>
</dbReference>
<dbReference type="AGR" id="MGI:1921846"/>
<dbReference type="CTD" id="1040"/>
<dbReference type="MGI" id="MGI:1921846">
    <property type="gene designation" value="Cds1"/>
</dbReference>
<dbReference type="VEuPathDB" id="HostDB:ENSMUSG00000029330"/>
<dbReference type="eggNOG" id="KOG1440">
    <property type="taxonomic scope" value="Eukaryota"/>
</dbReference>
<dbReference type="GeneTree" id="ENSGT00940000158223"/>
<dbReference type="HOGENOM" id="CLU_023471_0_1_1"/>
<dbReference type="InParanoid" id="P98191"/>
<dbReference type="OMA" id="FFAYMYF"/>
<dbReference type="OrthoDB" id="10260889at2759"/>
<dbReference type="PhylomeDB" id="P98191"/>
<dbReference type="TreeFam" id="TF313464"/>
<dbReference type="BRENDA" id="2.7.7.41">
    <property type="organism ID" value="3474"/>
</dbReference>
<dbReference type="Reactome" id="R-MMU-1483226">
    <property type="pathway name" value="Synthesis of PI"/>
</dbReference>
<dbReference type="UniPathway" id="UPA00557">
    <property type="reaction ID" value="UER00614"/>
</dbReference>
<dbReference type="BioGRID-ORCS" id="74596">
    <property type="hits" value="3 hits in 80 CRISPR screens"/>
</dbReference>
<dbReference type="ChiTaRS" id="Cds1">
    <property type="organism name" value="mouse"/>
</dbReference>
<dbReference type="PRO" id="PR:P98191"/>
<dbReference type="Proteomes" id="UP000000589">
    <property type="component" value="Chromosome 5"/>
</dbReference>
<dbReference type="RNAct" id="P98191">
    <property type="molecule type" value="protein"/>
</dbReference>
<dbReference type="Bgee" id="ENSMUSG00000029330">
    <property type="expression patterns" value="Expressed in urinary bladder urothelium and 227 other cell types or tissues"/>
</dbReference>
<dbReference type="GO" id="GO:0005783">
    <property type="term" value="C:endoplasmic reticulum"/>
    <property type="evidence" value="ECO:0000314"/>
    <property type="project" value="MGI"/>
</dbReference>
<dbReference type="GO" id="GO:0005789">
    <property type="term" value="C:endoplasmic reticulum membrane"/>
    <property type="evidence" value="ECO:0007669"/>
    <property type="project" value="UniProtKB-SubCell"/>
</dbReference>
<dbReference type="GO" id="GO:0016020">
    <property type="term" value="C:membrane"/>
    <property type="evidence" value="ECO:0000250"/>
    <property type="project" value="UniProtKB"/>
</dbReference>
<dbReference type="GO" id="GO:0004605">
    <property type="term" value="F:phosphatidate cytidylyltransferase activity"/>
    <property type="evidence" value="ECO:0000250"/>
    <property type="project" value="UniProtKB"/>
</dbReference>
<dbReference type="GO" id="GO:0016024">
    <property type="term" value="P:CDP-diacylglycerol biosynthetic process"/>
    <property type="evidence" value="ECO:0000250"/>
    <property type="project" value="UniProtKB"/>
</dbReference>
<dbReference type="GO" id="GO:0140042">
    <property type="term" value="P:lipid droplet formation"/>
    <property type="evidence" value="ECO:0000315"/>
    <property type="project" value="UniProtKB"/>
</dbReference>
<dbReference type="GO" id="GO:0006661">
    <property type="term" value="P:phosphatidylinositol biosynthetic process"/>
    <property type="evidence" value="ECO:0000250"/>
    <property type="project" value="UniProtKB"/>
</dbReference>
<dbReference type="GO" id="GO:0045600">
    <property type="term" value="P:positive regulation of fat cell differentiation"/>
    <property type="evidence" value="ECO:0000315"/>
    <property type="project" value="UniProtKB"/>
</dbReference>
<dbReference type="InterPro" id="IPR000374">
    <property type="entry name" value="PC_trans"/>
</dbReference>
<dbReference type="InterPro" id="IPR016720">
    <property type="entry name" value="PC_Trfase_euk"/>
</dbReference>
<dbReference type="PANTHER" id="PTHR13773">
    <property type="entry name" value="PHOSPHATIDATE CYTIDYLYLTRANSFERASE"/>
    <property type="match status" value="1"/>
</dbReference>
<dbReference type="PANTHER" id="PTHR13773:SF16">
    <property type="entry name" value="PHOSPHATIDATE CYTIDYLYLTRANSFERASE 1"/>
    <property type="match status" value="1"/>
</dbReference>
<dbReference type="Pfam" id="PF01148">
    <property type="entry name" value="CTP_transf_1"/>
    <property type="match status" value="1"/>
</dbReference>
<dbReference type="PIRSF" id="PIRSF018269">
    <property type="entry name" value="PC_trans_euk"/>
    <property type="match status" value="1"/>
</dbReference>
<dbReference type="PROSITE" id="PS01315">
    <property type="entry name" value="CDS"/>
    <property type="match status" value="1"/>
</dbReference>
<comment type="function">
    <text evidence="2 7">Catalyzes the conversion of phosphatidic acid (PA) to CDP-diacylglycerol (CDP-DAG), an essential intermediate in the synthesis of phosphatidylglycerol, cardiolipin and phosphatidylinositol (By similarity). Exhibits almost no acyl chain preference for PA, showing no discrimination for the sn-1/sn-2 acyl chain composition of PAs (By similarity). Plays an important role in regulating the growth of lipid droplets which are storage organelles at the center of lipid and energy homeostasis (PubMed:26946540). Positively regulates the differentiation and development of adipocytes (PubMed:26946540).</text>
</comment>
<comment type="catalytic activity">
    <reaction evidence="2">
        <text>a 1,2-diacyl-sn-glycero-3-phosphate + CTP + H(+) = a CDP-1,2-diacyl-sn-glycerol + diphosphate</text>
        <dbReference type="Rhea" id="RHEA:16229"/>
        <dbReference type="ChEBI" id="CHEBI:15378"/>
        <dbReference type="ChEBI" id="CHEBI:33019"/>
        <dbReference type="ChEBI" id="CHEBI:37563"/>
        <dbReference type="ChEBI" id="CHEBI:58332"/>
        <dbReference type="ChEBI" id="CHEBI:58608"/>
        <dbReference type="EC" id="2.7.7.41"/>
    </reaction>
    <physiologicalReaction direction="left-to-right" evidence="2">
        <dbReference type="Rhea" id="RHEA:16230"/>
    </physiologicalReaction>
</comment>
<comment type="catalytic activity">
    <reaction evidence="2">
        <text>1-octadecanoyl-2-(5Z,8Z,11Z,14Z-eicosatetraenoyl)-sn-glycero-3-phosphate + CTP + H(+) = 1-octadecanoyl-2-(5Z,8Z,11Z,14Z-eicosatetraenoyl)-sn-glycero-3-cytidine-5'-diphosphate + diphosphate</text>
        <dbReference type="Rhea" id="RHEA:45648"/>
        <dbReference type="ChEBI" id="CHEBI:15378"/>
        <dbReference type="ChEBI" id="CHEBI:33019"/>
        <dbReference type="ChEBI" id="CHEBI:37563"/>
        <dbReference type="ChEBI" id="CHEBI:77091"/>
        <dbReference type="ChEBI" id="CHEBI:85349"/>
    </reaction>
    <physiologicalReaction direction="left-to-right" evidence="2">
        <dbReference type="Rhea" id="RHEA:45649"/>
    </physiologicalReaction>
</comment>
<comment type="catalytic activity">
    <reaction evidence="2">
        <text>1-octadecanoyl-2-(9Z,12Z-octadecadienoyl)-sn-glycero-3-phosphate + CTP + H(+) = 1-octadecanoyl-2-(9Z,12Z-octadecadienoyl)-sn-glycero-3-cytidine-5'-diphosphate + diphosphate</text>
        <dbReference type="Rhea" id="RHEA:45660"/>
        <dbReference type="ChEBI" id="CHEBI:15378"/>
        <dbReference type="ChEBI" id="CHEBI:33019"/>
        <dbReference type="ChEBI" id="CHEBI:37563"/>
        <dbReference type="ChEBI" id="CHEBI:77098"/>
        <dbReference type="ChEBI" id="CHEBI:85352"/>
    </reaction>
    <physiologicalReaction direction="left-to-right" evidence="2">
        <dbReference type="Rhea" id="RHEA:45661"/>
    </physiologicalReaction>
</comment>
<comment type="catalytic activity">
    <reaction evidence="2">
        <text>1-hexadecanoyl-2-(5Z,8Z,11Z,14Z-eicosatetraenoyl)-sn-glycero-3-phosphate + CTP + H(+) = 1-hexadecanoyl-2-(5Z,8Z,11Z,14Z-eicosatetraenoyl)-sn-glycero-3-cytidine-5'-diphosphate + diphosphate</text>
        <dbReference type="Rhea" id="RHEA:45652"/>
        <dbReference type="ChEBI" id="CHEBI:15378"/>
        <dbReference type="ChEBI" id="CHEBI:33019"/>
        <dbReference type="ChEBI" id="CHEBI:37563"/>
        <dbReference type="ChEBI" id="CHEBI:72864"/>
        <dbReference type="ChEBI" id="CHEBI:85350"/>
    </reaction>
    <physiologicalReaction direction="left-to-right" evidence="2">
        <dbReference type="Rhea" id="RHEA:45653"/>
    </physiologicalReaction>
</comment>
<comment type="catalytic activity">
    <reaction evidence="2">
        <text>1,2-di-(5Z,8Z,11Z,14Z)-eicosatetraenoyl-sn-glycero-3-phosphate + CTP + H(+) = 1,2-di-(5Z,8Z,11Z,14Z-eicosatetraenoyl)-sn-glycero-3-cytidine-5'-diphosphate + diphosphate</text>
        <dbReference type="Rhea" id="RHEA:45656"/>
        <dbReference type="ChEBI" id="CHEBI:15378"/>
        <dbReference type="ChEBI" id="CHEBI:33019"/>
        <dbReference type="ChEBI" id="CHEBI:37563"/>
        <dbReference type="ChEBI" id="CHEBI:77126"/>
        <dbReference type="ChEBI" id="CHEBI:85351"/>
    </reaction>
    <physiologicalReaction direction="left-to-right" evidence="2">
        <dbReference type="Rhea" id="RHEA:45657"/>
    </physiologicalReaction>
</comment>
<comment type="catalytic activity">
    <reaction evidence="2">
        <text>1-octadecanoyl-2-(9Z-octadecenoyl)-sn-glycero-3-phosphate + CTP + H(+) = 1-octadecanoyl-2-(9Z-octadecenoyl)-sn-glycero-3-cytidine-5'-diphosphate + diphosphate</text>
        <dbReference type="Rhea" id="RHEA:45664"/>
        <dbReference type="ChEBI" id="CHEBI:15378"/>
        <dbReference type="ChEBI" id="CHEBI:33019"/>
        <dbReference type="ChEBI" id="CHEBI:37563"/>
        <dbReference type="ChEBI" id="CHEBI:74560"/>
        <dbReference type="ChEBI" id="CHEBI:85353"/>
    </reaction>
    <physiologicalReaction direction="left-to-right" evidence="2">
        <dbReference type="Rhea" id="RHEA:45665"/>
    </physiologicalReaction>
</comment>
<comment type="catalytic activity">
    <reaction evidence="2">
        <text>1-octadecanoyl-2-(4Z,7Z,10Z,13Z,16Z,19Z-docosahexaenoyl)-sn-glycero-3-phosphate + CTP + H(+) = 1-octadecanoyl-2-(4Z,7Z,10Z,13Z,16Z,19Z-docosahexaenoyl)-sn-glycero-3-cytidine-5'-diphosphate + diphosphate</text>
        <dbReference type="Rhea" id="RHEA:45668"/>
        <dbReference type="ChEBI" id="CHEBI:15378"/>
        <dbReference type="ChEBI" id="CHEBI:33019"/>
        <dbReference type="ChEBI" id="CHEBI:37563"/>
        <dbReference type="ChEBI" id="CHEBI:77130"/>
        <dbReference type="ChEBI" id="CHEBI:85354"/>
    </reaction>
    <physiologicalReaction direction="left-to-right" evidence="2">
        <dbReference type="Rhea" id="RHEA:45669"/>
    </physiologicalReaction>
</comment>
<comment type="catalytic activity">
    <reaction evidence="2">
        <text>1,2-di-(9Z,12Z-octadecadienoyl)-sn-glycero-3-phosphate + CTP + H(+) = 1,2-di-(9Z,12Z-octadecadienoyl)-sn-glycero-3-cytidine-5'-diphosphate + diphosphate</text>
        <dbReference type="Rhea" id="RHEA:45672"/>
        <dbReference type="ChEBI" id="CHEBI:15378"/>
        <dbReference type="ChEBI" id="CHEBI:33019"/>
        <dbReference type="ChEBI" id="CHEBI:37563"/>
        <dbReference type="ChEBI" id="CHEBI:77128"/>
        <dbReference type="ChEBI" id="CHEBI:85355"/>
    </reaction>
    <physiologicalReaction direction="left-to-right" evidence="2">
        <dbReference type="Rhea" id="RHEA:45673"/>
    </physiologicalReaction>
</comment>
<comment type="catalytic activity">
    <reaction evidence="2">
        <text>1,2-di-(9Z-octadecenoyl)-sn-glycero-3-phosphate + CTP + H(+) = 1,2-di-(9Z-octadecenoyl)-sn-glycero-3-cytidine-5'-diphosphate + diphosphate</text>
        <dbReference type="Rhea" id="RHEA:45676"/>
        <dbReference type="ChEBI" id="CHEBI:15378"/>
        <dbReference type="ChEBI" id="CHEBI:33019"/>
        <dbReference type="ChEBI" id="CHEBI:37563"/>
        <dbReference type="ChEBI" id="CHEBI:74546"/>
        <dbReference type="ChEBI" id="CHEBI:85356"/>
    </reaction>
    <physiologicalReaction direction="left-to-right" evidence="2">
        <dbReference type="Rhea" id="RHEA:45677"/>
    </physiologicalReaction>
</comment>
<comment type="cofactor">
    <cofactor evidence="1">
        <name>Mg(2+)</name>
        <dbReference type="ChEBI" id="CHEBI:18420"/>
    </cofactor>
</comment>
<comment type="pathway">
    <text>Phospholipid metabolism; CDP-diacylglycerol biosynthesis; CDP-diacylglycerol from sn-glycerol 3-phosphate: step 3/3.</text>
</comment>
<comment type="subunit">
    <text evidence="1 6">Homodimer (By similarity). Interacts with FOS; this interaction may enhance catalytic activity (PubMed:22105363).</text>
</comment>
<comment type="subcellular location">
    <subcellularLocation>
        <location evidence="5">Endoplasmic reticulum membrane</location>
        <topology evidence="3">Multi-pass membrane protein</topology>
    </subcellularLocation>
</comment>
<comment type="tissue specificity">
    <text evidence="5 8">Expressed in adult brain, eye, smooth muscle and testis. Highly expressed in the inner segment of the photoreceptor layer of adult retina.</text>
</comment>
<comment type="developmental stage">
    <text evidence="8">Expressed in a structure probably corresponding to the thymic rudiment 12.5 dpc. No expression could be detected at earlier and later stages of embryonic development (10.5 dpc and 17.5 dpc).</text>
</comment>
<comment type="similarity">
    <text evidence="9">Belongs to the CDS family.</text>
</comment>
<gene>
    <name evidence="10" type="primary">Cds1</name>
    <name type="synonym">Cds</name>
</gene>
<keyword id="KW-0256">Endoplasmic reticulum</keyword>
<keyword id="KW-0444">Lipid biosynthesis</keyword>
<keyword id="KW-0443">Lipid metabolism</keyword>
<keyword id="KW-0460">Magnesium</keyword>
<keyword id="KW-0472">Membrane</keyword>
<keyword id="KW-0488">Methylation</keyword>
<keyword id="KW-0548">Nucleotidyltransferase</keyword>
<keyword id="KW-0594">Phospholipid biosynthesis</keyword>
<keyword id="KW-1208">Phospholipid metabolism</keyword>
<keyword id="KW-0597">Phosphoprotein</keyword>
<keyword id="KW-1185">Reference proteome</keyword>
<keyword id="KW-0808">Transferase</keyword>
<keyword id="KW-0812">Transmembrane</keyword>
<keyword id="KW-1133">Transmembrane helix</keyword>
<protein>
    <recommendedName>
        <fullName evidence="9">Phosphatidate cytidylyltransferase 1</fullName>
        <ecNumber evidence="2">2.7.7.41</ecNumber>
    </recommendedName>
    <alternativeName>
        <fullName>CDP-DAG synthase 1</fullName>
    </alternativeName>
    <alternativeName>
        <fullName>CDP-DG synthase 1</fullName>
    </alternativeName>
    <alternativeName>
        <fullName>CDP-diacylglycerol synthase 1</fullName>
        <shortName>CDS 1</shortName>
    </alternativeName>
    <alternativeName>
        <fullName>CDP-diglyceride pyrophosphorylase 1</fullName>
    </alternativeName>
    <alternativeName>
        <fullName>CDP-diglyceride synthase 1</fullName>
    </alternativeName>
    <alternativeName>
        <fullName>CTP:phosphatidate cytidylyltransferase 1</fullName>
    </alternativeName>
</protein>
<name>CDS1_MOUSE</name>
<organism>
    <name type="scientific">Mus musculus</name>
    <name type="common">Mouse</name>
    <dbReference type="NCBI Taxonomy" id="10090"/>
    <lineage>
        <taxon>Eukaryota</taxon>
        <taxon>Metazoa</taxon>
        <taxon>Chordata</taxon>
        <taxon>Craniata</taxon>
        <taxon>Vertebrata</taxon>
        <taxon>Euteleostomi</taxon>
        <taxon>Mammalia</taxon>
        <taxon>Eutheria</taxon>
        <taxon>Euarchontoglires</taxon>
        <taxon>Glires</taxon>
        <taxon>Rodentia</taxon>
        <taxon>Myomorpha</taxon>
        <taxon>Muroidea</taxon>
        <taxon>Muridae</taxon>
        <taxon>Murinae</taxon>
        <taxon>Mus</taxon>
        <taxon>Mus</taxon>
    </lineage>
</organism>
<sequence length="461" mass="52875">MLELRHRGGCPGPGGAGAPPPREGEAAGGDHETESTSDKETDIDDRYGDLDARGDSDVPEVPPSSDRTPEILKKALSGLSSRWKNWWIRGILTLTMISLFFLIIYMGSFMLMLLVLGIQVKCFHEIITIGYRVYHSYDLPWFRTLSWYFLLCVNYFFYGETVADYFATFVQREEQLQFLIRYHRFISFALYLAGFCMFVLSLVKKHYRLQFYMFAWTHVTLLITVTQSHLVIQNLFEGMIWFLVPISSVICNDITAYLFGFFFGRTPLIKLSPKKTWEGFIGGFFSTVIFGFIAAYVLSKYQYFVCPVEYRSDVNSFVTECEPSELFQLQNYSLPPFLQAVLSRETVSLYPFQIHSIALSTFASLIGPFGGFFASGFKRAFKIKDFANTIPGHGGIMDRFDCQYLMATFVHVYITSFIRGPNPSKVLQQLLVLQPEQQLNIYRTLKIHLTEKGILQPTLKV</sequence>
<accession>P98191</accession>
<accession>Q8CGZ1</accession>
<feature type="chain" id="PRO_0000090714" description="Phosphatidate cytidylyltransferase 1">
    <location>
        <begin position="1"/>
        <end position="461"/>
    </location>
</feature>
<feature type="transmembrane region" description="Helical" evidence="3">
    <location>
        <begin position="96"/>
        <end position="116"/>
    </location>
</feature>
<feature type="transmembrane region" description="Helical" evidence="3">
    <location>
        <begin position="149"/>
        <end position="169"/>
    </location>
</feature>
<feature type="transmembrane region" description="Helical" evidence="3">
    <location>
        <begin position="183"/>
        <end position="203"/>
    </location>
</feature>
<feature type="transmembrane region" description="Helical" evidence="3">
    <location>
        <begin position="230"/>
        <end position="250"/>
    </location>
</feature>
<feature type="transmembrane region" description="Helical" evidence="3">
    <location>
        <begin position="279"/>
        <end position="299"/>
    </location>
</feature>
<feature type="transmembrane region" description="Helical" evidence="3">
    <location>
        <begin position="357"/>
        <end position="377"/>
    </location>
</feature>
<feature type="region of interest" description="Disordered" evidence="4">
    <location>
        <begin position="1"/>
        <end position="68"/>
    </location>
</feature>
<feature type="compositionally biased region" description="Basic and acidic residues" evidence="4">
    <location>
        <begin position="22"/>
        <end position="56"/>
    </location>
</feature>
<feature type="modified residue" description="Omega-N-methylarginine" evidence="12">
    <location>
        <position position="7"/>
    </location>
</feature>
<feature type="modified residue" description="Phosphoserine" evidence="1">
    <location>
        <position position="35"/>
    </location>
</feature>
<feature type="modified residue" description="Phosphoserine" evidence="11">
    <location>
        <position position="37"/>
    </location>
</feature>
<evidence type="ECO:0000250" key="1">
    <source>
        <dbReference type="UniProtKB" id="O35052"/>
    </source>
</evidence>
<evidence type="ECO:0000250" key="2">
    <source>
        <dbReference type="UniProtKB" id="Q92903"/>
    </source>
</evidence>
<evidence type="ECO:0000255" key="3"/>
<evidence type="ECO:0000256" key="4">
    <source>
        <dbReference type="SAM" id="MobiDB-lite"/>
    </source>
</evidence>
<evidence type="ECO:0000269" key="5">
    <source>
    </source>
</evidence>
<evidence type="ECO:0000269" key="6">
    <source>
    </source>
</evidence>
<evidence type="ECO:0000269" key="7">
    <source>
    </source>
</evidence>
<evidence type="ECO:0000269" key="8">
    <source>
    </source>
</evidence>
<evidence type="ECO:0000305" key="9"/>
<evidence type="ECO:0000312" key="10">
    <source>
        <dbReference type="MGI" id="MGI:1921846"/>
    </source>
</evidence>
<evidence type="ECO:0007744" key="11">
    <source>
    </source>
</evidence>
<evidence type="ECO:0007744" key="12">
    <source>
    </source>
</evidence>
<proteinExistence type="evidence at protein level"/>